<comment type="pathway">
    <text>Antifungal biosynthesis; monensin biosynthesis.</text>
</comment>
<comment type="similarity">
    <text evidence="3">Belongs to the short-chain dehydrogenases/reductases (SDR) family.</text>
</comment>
<organism>
    <name type="scientific">Streptomyces virginiae</name>
    <name type="common">Streptomyces cinnamonensis</name>
    <dbReference type="NCBI Taxonomy" id="1961"/>
    <lineage>
        <taxon>Bacteria</taxon>
        <taxon>Bacillati</taxon>
        <taxon>Actinomycetota</taxon>
        <taxon>Actinomycetes</taxon>
        <taxon>Kitasatosporales</taxon>
        <taxon>Streptomycetaceae</taxon>
        <taxon>Streptomyces</taxon>
    </lineage>
</organism>
<evidence type="ECO:0000250" key="1"/>
<evidence type="ECO:0000255" key="2">
    <source>
        <dbReference type="PROSITE-ProRule" id="PRU10001"/>
    </source>
</evidence>
<evidence type="ECO:0000305" key="3"/>
<keyword id="KW-0045">Antibiotic biosynthesis</keyword>
<keyword id="KW-0520">NAD</keyword>
<keyword id="KW-0560">Oxidoreductase</keyword>
<protein>
    <recommendedName>
        <fullName>Monensin polyketide synthase putative ketoacyl reductase</fullName>
        <ecNumber>1.3.1.-</ecNumber>
    </recommendedName>
    <alternativeName>
        <fullName>ORF5</fullName>
    </alternativeName>
</protein>
<reference key="1">
    <citation type="journal article" date="1992" name="Mol. Gen. Genet.">
        <title>Characterisation of actI-homologous DNA encoding polyketide synthase genes from the monensin producer Streptomyces cinnamonensis.</title>
        <authorList>
            <person name="Arrowsmith T.J."/>
            <person name="Malpartida F."/>
            <person name="Sherman D.H."/>
            <person name="Birch A."/>
            <person name="Hopwood D.A."/>
            <person name="Robinson J.A."/>
        </authorList>
    </citation>
    <scope>NUCLEOTIDE SEQUENCE [GENOMIC DNA]</scope>
    <source>
        <strain>A3823.5</strain>
    </source>
</reference>
<dbReference type="EC" id="1.3.1.-"/>
<dbReference type="EMBL" id="Z11511">
    <property type="protein sequence ID" value="CAA77599.1"/>
    <property type="molecule type" value="Genomic_DNA"/>
</dbReference>
<dbReference type="PIR" id="S25079">
    <property type="entry name" value="S25079"/>
</dbReference>
<dbReference type="SMR" id="P41177"/>
<dbReference type="UniPathway" id="UPA00178"/>
<dbReference type="GO" id="GO:0016491">
    <property type="term" value="F:oxidoreductase activity"/>
    <property type="evidence" value="ECO:0007669"/>
    <property type="project" value="UniProtKB-KW"/>
</dbReference>
<dbReference type="GO" id="GO:0017000">
    <property type="term" value="P:antibiotic biosynthetic process"/>
    <property type="evidence" value="ECO:0007669"/>
    <property type="project" value="UniProtKB-KW"/>
</dbReference>
<dbReference type="GO" id="GO:0006629">
    <property type="term" value="P:lipid metabolic process"/>
    <property type="evidence" value="ECO:0007669"/>
    <property type="project" value="UniProtKB-ARBA"/>
</dbReference>
<dbReference type="GO" id="GO:0032787">
    <property type="term" value="P:monocarboxylic acid metabolic process"/>
    <property type="evidence" value="ECO:0007669"/>
    <property type="project" value="UniProtKB-ARBA"/>
</dbReference>
<dbReference type="FunFam" id="3.40.50.720:FF:000084">
    <property type="entry name" value="Short-chain dehydrogenase reductase"/>
    <property type="match status" value="1"/>
</dbReference>
<dbReference type="Gene3D" id="3.40.50.720">
    <property type="entry name" value="NAD(P)-binding Rossmann-like Domain"/>
    <property type="match status" value="1"/>
</dbReference>
<dbReference type="InterPro" id="IPR036291">
    <property type="entry name" value="NAD(P)-bd_dom_sf"/>
</dbReference>
<dbReference type="InterPro" id="IPR020904">
    <property type="entry name" value="Sc_DH/Rdtase_CS"/>
</dbReference>
<dbReference type="InterPro" id="IPR050259">
    <property type="entry name" value="SDR"/>
</dbReference>
<dbReference type="InterPro" id="IPR002347">
    <property type="entry name" value="SDR_fam"/>
</dbReference>
<dbReference type="NCBIfam" id="NF009466">
    <property type="entry name" value="PRK12826.1-2"/>
    <property type="match status" value="1"/>
</dbReference>
<dbReference type="PANTHER" id="PTHR42879">
    <property type="entry name" value="3-OXOACYL-(ACYL-CARRIER-PROTEIN) REDUCTASE"/>
    <property type="match status" value="1"/>
</dbReference>
<dbReference type="PANTHER" id="PTHR42879:SF2">
    <property type="entry name" value="3-OXOACYL-[ACYL-CARRIER-PROTEIN] REDUCTASE FABG"/>
    <property type="match status" value="1"/>
</dbReference>
<dbReference type="Pfam" id="PF00106">
    <property type="entry name" value="adh_short"/>
    <property type="match status" value="1"/>
</dbReference>
<dbReference type="PRINTS" id="PR00081">
    <property type="entry name" value="GDHRDH"/>
</dbReference>
<dbReference type="PRINTS" id="PR00080">
    <property type="entry name" value="SDRFAMILY"/>
</dbReference>
<dbReference type="SMART" id="SM00822">
    <property type="entry name" value="PKS_KR"/>
    <property type="match status" value="1"/>
</dbReference>
<dbReference type="SUPFAM" id="SSF51735">
    <property type="entry name" value="NAD(P)-binding Rossmann-fold domains"/>
    <property type="match status" value="1"/>
</dbReference>
<dbReference type="PROSITE" id="PS00061">
    <property type="entry name" value="ADH_SHORT"/>
    <property type="match status" value="1"/>
</dbReference>
<name>DHKR_STRVG</name>
<proteinExistence type="inferred from homology"/>
<accession>P41177</accession>
<feature type="chain" id="PRO_0000054634" description="Monensin polyketide synthase putative ketoacyl reductase">
    <location>
        <begin position="1"/>
        <end position="261"/>
    </location>
</feature>
<feature type="active site" description="Proton acceptor" evidence="2">
    <location>
        <position position="157"/>
    </location>
</feature>
<feature type="binding site" evidence="1">
    <location>
        <begin position="10"/>
        <end position="34"/>
    </location>
    <ligand>
        <name>NAD(+)</name>
        <dbReference type="ChEBI" id="CHEBI:57540"/>
    </ligand>
</feature>
<feature type="binding site" evidence="1">
    <location>
        <position position="144"/>
    </location>
    <ligand>
        <name>substrate</name>
    </ligand>
</feature>
<sequence>MTQSTSRVALVTGATSGIGLATARLLAAQGHLVFLGARTESDVIATVKALRNDGLEAEGQVLDVRDGASVTAFVQAAVDRYGRIDVLVNNAGRSGGGVTADLTDELWDDVIDTNLNSVFRMTRAVLTTGGMRTRERGRIINVASTAGKQGVVLGAPYSASKHGVVGFTKALGNELAPTGITVNAVCPGYVETPMAQRVRQGYAAAYDTTEEAILTKFQAKIPLGRYSTPEEVAGLIGYLASDTAASITSQALNVCGGLGNF</sequence>